<comment type="function">
    <text evidence="2 5 7">Component of the MICOS complex, a large protein complex of the mitochondrial inner membrane that plays crucial roles in the maintenance of crista junctions, inner membrane architecture, and formation of contact sites to the outer membrane (PubMed:25997101, PubMed:27623147, PubMed:32567732). Constituent of mature MICOS complex, it is required for the formation of cristae junction (CJ) and maintenance of cristae morphology (PubMed:25997101, PubMed:27623147, PubMed:32567732). Required for the incorporation of MICOS10/MIC10 into the MICOS complex (PubMed:25997101, PubMed:27623147).</text>
</comment>
<comment type="subunit">
    <text evidence="2">Component of the mitochondrial contact site and cristae organizing system (MICOS) complex, composed of at least MICOS10/MIC10, CHCHD3/MIC19, CHCHD6/MIC25, APOO/MIC26, MICOS13/MIC13, APOOL/MIC27 and IMMT/MIC60. The MICOS complex associates with mitochondrial outer membrane proteins SAMM50, MTX1 and MTX2 (together described as components of the mitochondrial outer membrane sorting assembly machinery (SAM) complex) and DNAJC11, mitochondrial inner membrane protein TMEM11 and with HSPA9. The MICOS and SAM complexes together with DNAJC11 are part of a large protein complex spanning both membranes termed the mitochondrial intermembrane space bridging (MIB) complex.</text>
</comment>
<comment type="interaction">
    <interactant intactId="EBI-1053887">
        <id>Q5XKP0</id>
    </interactant>
    <interactant intactId="EBI-2876502">
        <id>Q96CM8</id>
        <label>ACSF2</label>
    </interactant>
    <organismsDiffer>false</organismsDiffer>
    <experiments>3</experiments>
</comment>
<comment type="interaction">
    <interactant intactId="EBI-1053887">
        <id>Q5XKP0</id>
    </interactant>
    <interactant intactId="EBI-1220105">
        <id>P02654</id>
        <label>APOC1</label>
    </interactant>
    <organismsDiffer>false</organismsDiffer>
    <experiments>3</experiments>
</comment>
<comment type="interaction">
    <interactant intactId="EBI-1053887">
        <id>Q5XKP0</id>
    </interactant>
    <interactant intactId="EBI-18302142">
        <id>P55056</id>
        <label>APOC4</label>
    </interactant>
    <organismsDiffer>false</organismsDiffer>
    <experiments>3</experiments>
</comment>
<comment type="interaction">
    <interactant intactId="EBI-1053887">
        <id>Q5XKP0</id>
    </interactant>
    <interactant intactId="EBI-517508">
        <id>Q9NR28</id>
        <label>DIABLO</label>
    </interactant>
    <organismsDiffer>false</organismsDiffer>
    <experiments>3</experiments>
</comment>
<comment type="interaction">
    <interactant intactId="EBI-1053887">
        <id>Q5XKP0</id>
    </interactant>
    <interactant intactId="EBI-947253">
        <id>Q9UBD0</id>
        <label>HSFX2</label>
    </interactant>
    <organismsDiffer>false</organismsDiffer>
    <experiments>3</experiments>
</comment>
<comment type="interaction">
    <interactant intactId="EBI-1053887">
        <id>Q5XKP0</id>
    </interactant>
    <interactant intactId="EBI-741171">
        <id>Q96AL5</id>
        <label>PBX3</label>
    </interactant>
    <organismsDiffer>false</organismsDiffer>
    <experiments>3</experiments>
</comment>
<comment type="interaction">
    <interactant intactId="EBI-1053887">
        <id>Q5XKP0</id>
    </interactant>
    <interactant intactId="EBI-17589229">
        <id>Q6NTF9-3</id>
        <label>RHBDD2</label>
    </interactant>
    <organismsDiffer>false</organismsDiffer>
    <experiments>3</experiments>
</comment>
<comment type="interaction">
    <interactant intactId="EBI-1053887">
        <id>Q5XKP0</id>
    </interactant>
    <interactant intactId="EBI-10278496">
        <id>Q53QW1</id>
        <label>TEX44</label>
    </interactant>
    <organismsDiffer>false</organismsDiffer>
    <experiments>3</experiments>
</comment>
<comment type="subcellular location">
    <subcellularLocation>
        <location evidence="2 3">Mitochondrion inner membrane</location>
        <topology evidence="1">Single-pass membrane protein</topology>
    </subcellularLocation>
    <text evidence="2">Enriched at crista junctions.</text>
</comment>
<comment type="disease" evidence="4 5 6">
    <disease id="DI-05483">
        <name>Combined oxidative phosphorylation deficiency 37</name>
        <acronym>COXPD37</acronym>
        <description>An autosomal recessive disorder due to mitochondrial dysfunction and characterized by hypotonia, failure to thrive, progressive neurodegeneration with neurologic deterioration after the first months of life, global developmental delay, as well as liver dysfunction. Some patients may have hypertrophic cardiomyopathy, loss of vision and hearing, and/or seizures. Death in first months or years of life is observed in most patients.</description>
        <dbReference type="MIM" id="618329"/>
    </disease>
    <text>The disease is caused by variants affecting the gene represented in this entry.</text>
</comment>
<comment type="similarity">
    <text evidence="10">Belongs to the MICOS complex subunit Mic13 family.</text>
</comment>
<comment type="sequence caution" evidence="10">
    <conflict type="erroneous gene model prediction">
        <sequence resource="EMBL" id="AC011499"/>
    </conflict>
</comment>
<comment type="sequence caution" evidence="10">
    <conflict type="erroneous gene model prediction">
        <sequence resource="EMBL-CDS" id="EAW69159"/>
    </conflict>
</comment>
<gene>
    <name evidence="12" type="primary">MICOS13</name>
    <name type="synonym">C19orf70</name>
    <name evidence="8" type="synonym">MIC13</name>
    <name evidence="8" type="synonym">QIL1</name>
</gene>
<protein>
    <recommendedName>
        <fullName evidence="10">MICOS complex subunit MIC13</fullName>
    </recommendedName>
    <alternativeName>
        <fullName evidence="9">Protein P117</fullName>
    </alternativeName>
</protein>
<sequence>MVARVWSLMRFLIKGSVAGGAVYLVYDQELLGPSDKSQAALQKAGEVVPPAMYQFSQYVCQQTGLQIPQLPAPPKIYFPIRDSWNAGIMTVMSALSVAPSKAREYSKEGWEYVKARTK</sequence>
<evidence type="ECO:0000255" key="1"/>
<evidence type="ECO:0000269" key="2">
    <source>
    </source>
</evidence>
<evidence type="ECO:0000269" key="3">
    <source>
    </source>
</evidence>
<evidence type="ECO:0000269" key="4">
    <source>
    </source>
</evidence>
<evidence type="ECO:0000269" key="5">
    <source>
    </source>
</evidence>
<evidence type="ECO:0000269" key="6">
    <source>
    </source>
</evidence>
<evidence type="ECO:0000269" key="7">
    <source>
    </source>
</evidence>
<evidence type="ECO:0000303" key="8">
    <source>
    </source>
</evidence>
<evidence type="ECO:0000303" key="9">
    <source ref="1"/>
</evidence>
<evidence type="ECO:0000305" key="10"/>
<evidence type="ECO:0000305" key="11">
    <source>
    </source>
</evidence>
<evidence type="ECO:0000312" key="12">
    <source>
        <dbReference type="HGNC" id="HGNC:33702"/>
    </source>
</evidence>
<reference key="1">
    <citation type="submission" date="2004-03" db="EMBL/GenBank/DDBJ databases">
        <title>A novel retroposon P117 in the intergenic region of alpha-globin genes in macaques.</title>
        <authorList>
            <person name="Takenaka A."/>
            <person name="Kawamoto S."/>
            <person name="Varavudhi P."/>
            <person name="Kawamoto Y."/>
            <person name="Suzuki J."/>
            <person name="Eakavibatha C."/>
            <person name="Terao K."/>
            <person name="Nakamura S."/>
            <person name="Hirai H."/>
            <person name="Takenaka O."/>
        </authorList>
    </citation>
    <scope>NUCLEOTIDE SEQUENCE [GENOMIC DNA]</scope>
</reference>
<reference key="2">
    <citation type="journal article" date="2004" name="Nature">
        <title>The DNA sequence and biology of human chromosome 19.</title>
        <authorList>
            <person name="Grimwood J."/>
            <person name="Gordon L.A."/>
            <person name="Olsen A.S."/>
            <person name="Terry A."/>
            <person name="Schmutz J."/>
            <person name="Lamerdin J.E."/>
            <person name="Hellsten U."/>
            <person name="Goodstein D."/>
            <person name="Couronne O."/>
            <person name="Tran-Gyamfi M."/>
            <person name="Aerts A."/>
            <person name="Altherr M."/>
            <person name="Ashworth L."/>
            <person name="Bajorek E."/>
            <person name="Black S."/>
            <person name="Branscomb E."/>
            <person name="Caenepeel S."/>
            <person name="Carrano A.V."/>
            <person name="Caoile C."/>
            <person name="Chan Y.M."/>
            <person name="Christensen M."/>
            <person name="Cleland C.A."/>
            <person name="Copeland A."/>
            <person name="Dalin E."/>
            <person name="Dehal P."/>
            <person name="Denys M."/>
            <person name="Detter J.C."/>
            <person name="Escobar J."/>
            <person name="Flowers D."/>
            <person name="Fotopulos D."/>
            <person name="Garcia C."/>
            <person name="Georgescu A.M."/>
            <person name="Glavina T."/>
            <person name="Gomez M."/>
            <person name="Gonzales E."/>
            <person name="Groza M."/>
            <person name="Hammon N."/>
            <person name="Hawkins T."/>
            <person name="Haydu L."/>
            <person name="Ho I."/>
            <person name="Huang W."/>
            <person name="Israni S."/>
            <person name="Jett J."/>
            <person name="Kadner K."/>
            <person name="Kimball H."/>
            <person name="Kobayashi A."/>
            <person name="Larionov V."/>
            <person name="Leem S.-H."/>
            <person name="Lopez F."/>
            <person name="Lou Y."/>
            <person name="Lowry S."/>
            <person name="Malfatti S."/>
            <person name="Martinez D."/>
            <person name="McCready P.M."/>
            <person name="Medina C."/>
            <person name="Morgan J."/>
            <person name="Nelson K."/>
            <person name="Nolan M."/>
            <person name="Ovcharenko I."/>
            <person name="Pitluck S."/>
            <person name="Pollard M."/>
            <person name="Popkie A.P."/>
            <person name="Predki P."/>
            <person name="Quan G."/>
            <person name="Ramirez L."/>
            <person name="Rash S."/>
            <person name="Retterer J."/>
            <person name="Rodriguez A."/>
            <person name="Rogers S."/>
            <person name="Salamov A."/>
            <person name="Salazar A."/>
            <person name="She X."/>
            <person name="Smith D."/>
            <person name="Slezak T."/>
            <person name="Solovyev V."/>
            <person name="Thayer N."/>
            <person name="Tice H."/>
            <person name="Tsai M."/>
            <person name="Ustaszewska A."/>
            <person name="Vo N."/>
            <person name="Wagner M."/>
            <person name="Wheeler J."/>
            <person name="Wu K."/>
            <person name="Xie G."/>
            <person name="Yang J."/>
            <person name="Dubchak I."/>
            <person name="Furey T.S."/>
            <person name="DeJong P."/>
            <person name="Dickson M."/>
            <person name="Gordon D."/>
            <person name="Eichler E.E."/>
            <person name="Pennacchio L.A."/>
            <person name="Richardson P."/>
            <person name="Stubbs L."/>
            <person name="Rokhsar D.S."/>
            <person name="Myers R.M."/>
            <person name="Rubin E.M."/>
            <person name="Lucas S.M."/>
        </authorList>
    </citation>
    <scope>NUCLEOTIDE SEQUENCE [LARGE SCALE GENOMIC DNA]</scope>
</reference>
<reference key="3">
    <citation type="submission" date="2005-09" db="EMBL/GenBank/DDBJ databases">
        <authorList>
            <person name="Mural R.J."/>
            <person name="Istrail S."/>
            <person name="Sutton G.G."/>
            <person name="Florea L."/>
            <person name="Halpern A.L."/>
            <person name="Mobarry C.M."/>
            <person name="Lippert R."/>
            <person name="Walenz B."/>
            <person name="Shatkay H."/>
            <person name="Dew I."/>
            <person name="Miller J.R."/>
            <person name="Flanigan M.J."/>
            <person name="Edwards N.J."/>
            <person name="Bolanos R."/>
            <person name="Fasulo D."/>
            <person name="Halldorsson B.V."/>
            <person name="Hannenhalli S."/>
            <person name="Turner R."/>
            <person name="Yooseph S."/>
            <person name="Lu F."/>
            <person name="Nusskern D.R."/>
            <person name="Shue B.C."/>
            <person name="Zheng X.H."/>
            <person name="Zhong F."/>
            <person name="Delcher A.L."/>
            <person name="Huson D.H."/>
            <person name="Kravitz S.A."/>
            <person name="Mouchard L."/>
            <person name="Reinert K."/>
            <person name="Remington K.A."/>
            <person name="Clark A.G."/>
            <person name="Waterman M.S."/>
            <person name="Eichler E.E."/>
            <person name="Adams M.D."/>
            <person name="Hunkapiller M.W."/>
            <person name="Myers E.W."/>
            <person name="Venter J.C."/>
        </authorList>
    </citation>
    <scope>NUCLEOTIDE SEQUENCE [LARGE SCALE GENOMIC DNA]</scope>
</reference>
<reference key="4">
    <citation type="journal article" date="2004" name="Genome Res.">
        <title>The status, quality, and expansion of the NIH full-length cDNA project: the Mammalian Gene Collection (MGC).</title>
        <authorList>
            <consortium name="The MGC Project Team"/>
        </authorList>
    </citation>
    <scope>NUCLEOTIDE SEQUENCE [LARGE SCALE MRNA]</scope>
    <source>
        <tissue>Brain</tissue>
        <tissue>Pancreas</tissue>
    </source>
</reference>
<reference key="5">
    <citation type="journal article" date="2011" name="BMC Syst. Biol.">
        <title>Initial characterization of the human central proteome.</title>
        <authorList>
            <person name="Burkard T.R."/>
            <person name="Planyavsky M."/>
            <person name="Kaupe I."/>
            <person name="Breitwieser F.P."/>
            <person name="Buerckstuemmer T."/>
            <person name="Bennett K.L."/>
            <person name="Superti-Furga G."/>
            <person name="Colinge J."/>
        </authorList>
    </citation>
    <scope>IDENTIFICATION BY MASS SPECTROMETRY [LARGE SCALE ANALYSIS]</scope>
</reference>
<reference key="6">
    <citation type="journal article" date="2015" name="Elife">
        <title>QIL1 is a novel mitochondrial protein required for MICOS complex stability and cristae morphology.</title>
        <authorList>
            <person name="Guarani V."/>
            <person name="McNeill E.M."/>
            <person name="Paulo J.A."/>
            <person name="Huttlin E.L."/>
            <person name="Froehlich F."/>
            <person name="Gygi S.P."/>
            <person name="Van Vactor D."/>
            <person name="Harper J.W."/>
        </authorList>
    </citation>
    <scope>FUNCTION</scope>
    <scope>SUBCELLULAR LOCATION</scope>
    <scope>IDENTIFICATION BY MASS SPECTROMETRY</scope>
    <scope>IDENTIFICATION IN THE MICOS COMPLEX</scope>
</reference>
<reference key="7">
    <citation type="journal article" date="2015" name="Proteomics">
        <title>N-terminome analysis of the human mitochondrial proteome.</title>
        <authorList>
            <person name="Vaca Jacome A.S."/>
            <person name="Rabilloud T."/>
            <person name="Schaeffer-Reiss C."/>
            <person name="Rompais M."/>
            <person name="Ayoub D."/>
            <person name="Lane L."/>
            <person name="Bairoch A."/>
            <person name="Van Dorsselaer A."/>
            <person name="Carapito C."/>
        </authorList>
    </citation>
    <scope>IDENTIFICATION BY MASS SPECTROMETRY [LARGE SCALE ANALYSIS]</scope>
</reference>
<reference key="8">
    <citation type="journal article" date="2016" name="Cell Rep.">
        <title>APEX Fingerprinting Reveals the Subcellular Localization of Proteins of Interest.</title>
        <authorList>
            <person name="Lee S.Y."/>
            <person name="Kang M.G."/>
            <person name="Park J.S."/>
            <person name="Lee G."/>
            <person name="Ting A.Y."/>
            <person name="Rhee H.W."/>
        </authorList>
    </citation>
    <scope>SUBCELLULAR LOCATION</scope>
    <scope>TOPOLOGY</scope>
</reference>
<reference key="9">
    <citation type="journal article" date="2016" name="Elife">
        <title>QIL1 mutation causes MICOS disassembly and early onset fatal mitochondrial encephalopathy with liver disease.</title>
        <authorList>
            <person name="Guarani V."/>
            <person name="Jardel C."/>
            <person name="Chretien D."/>
            <person name="Lombes A."/>
            <person name="Benit P."/>
            <person name="Labasse C."/>
            <person name="Lacene E."/>
            <person name="Bourillon A."/>
            <person name="Imbard A."/>
            <person name="Benoist J.F."/>
            <person name="Dorboz I."/>
            <person name="Gilleron M."/>
            <person name="Goetzman E.S."/>
            <person name="Gaignard P."/>
            <person name="Slama A."/>
            <person name="Elmaleh-Berges M."/>
            <person name="Romero N.B."/>
            <person name="Rustin P."/>
            <person name="Ogier de Baulny H."/>
            <person name="Paulo J.A."/>
            <person name="Harper J.W."/>
            <person name="Schiff M."/>
        </authorList>
    </citation>
    <scope>FUNCTION</scope>
    <scope>INVOLVEMENT IN COXPD37</scope>
</reference>
<reference key="10">
    <citation type="journal article" date="2016" name="Eur. J. Hum. Genet.">
        <title>Mitochondrial hepato-encephalopathy due to deficiency of QIL1/MIC13 (C19orf70), a MICOS complex subunit.</title>
        <authorList>
            <person name="Zeharia A."/>
            <person name="Friedman J.R."/>
            <person name="Tobar A."/>
            <person name="Saada A."/>
            <person name="Konen O."/>
            <person name="Fellig Y."/>
            <person name="Shaag A."/>
            <person name="Nunnari J."/>
            <person name="Elpeleg O."/>
        </authorList>
    </citation>
    <scope>INVOLVEMENT IN COXPD37</scope>
</reference>
<reference key="11">
    <citation type="journal article" date="2018" name="J. Hum. Genet.">
        <title>QIL1-dependent assembly of MICOS complex-lethal mutation in C19ORF70 resulting in liver disease and severe neurological retardation.</title>
        <authorList>
            <person name="Goediker J."/>
            <person name="Grueneberg M."/>
            <person name="DuChesne I."/>
            <person name="Reunert J."/>
            <person name="Rust S."/>
            <person name="Westermann C."/>
            <person name="Wada Y."/>
            <person name="Classen G."/>
            <person name="Langhans C.D."/>
            <person name="Schlingmann K.P."/>
            <person name="Rodenburg R.J."/>
            <person name="Pohlmann R."/>
            <person name="Marquardt T."/>
        </authorList>
    </citation>
    <scope>INVOLVEMENT IN COXPD37</scope>
</reference>
<reference key="12">
    <citation type="journal article" date="2020" name="EMBO J.">
        <title>MICOS assembly controls mitochondrial inner membrane remodeling and crista junction redistribution to mediate cristae formation.</title>
        <authorList>
            <person name="Stephan T."/>
            <person name="Brueser C."/>
            <person name="Deckers M."/>
            <person name="Steyer A.M."/>
            <person name="Balzarotti F."/>
            <person name="Barbot M."/>
            <person name="Behr T.S."/>
            <person name="Heim G."/>
            <person name="Huebner W."/>
            <person name="Ilgen P."/>
            <person name="Lange F."/>
            <person name="Pacheu-Grau D."/>
            <person name="Pape J.K."/>
            <person name="Stoldt S."/>
            <person name="Huser T."/>
            <person name="Hell S.W."/>
            <person name="Moebius W."/>
            <person name="Rehling P."/>
            <person name="Riedel D."/>
            <person name="Jakobs S."/>
        </authorList>
    </citation>
    <scope>FUNCTION</scope>
</reference>
<organism>
    <name type="scientific">Homo sapiens</name>
    <name type="common">Human</name>
    <dbReference type="NCBI Taxonomy" id="9606"/>
    <lineage>
        <taxon>Eukaryota</taxon>
        <taxon>Metazoa</taxon>
        <taxon>Chordata</taxon>
        <taxon>Craniata</taxon>
        <taxon>Vertebrata</taxon>
        <taxon>Euteleostomi</taxon>
        <taxon>Mammalia</taxon>
        <taxon>Eutheria</taxon>
        <taxon>Euarchontoglires</taxon>
        <taxon>Primates</taxon>
        <taxon>Haplorrhini</taxon>
        <taxon>Catarrhini</taxon>
        <taxon>Hominidae</taxon>
        <taxon>Homo</taxon>
    </lineage>
</organism>
<accession>Q5XKP0</accession>
<accession>A0A0B4J2A5</accession>
<accession>K7EKR0</accession>
<accession>Q86YE5</accession>
<feature type="chain" id="PRO_0000289985" description="MICOS complex subunit MIC13">
    <location>
        <begin position="1"/>
        <end position="118"/>
    </location>
</feature>
<feature type="topological domain" description="Mitochondrial matrix" evidence="11">
    <location>
        <begin position="1"/>
        <end position="7"/>
    </location>
</feature>
<feature type="transmembrane region" description="Helical" evidence="1">
    <location>
        <begin position="8"/>
        <end position="26"/>
    </location>
</feature>
<feature type="topological domain" description="Mitochondrial intermembrane" evidence="11">
    <location>
        <begin position="27"/>
        <end position="118"/>
    </location>
</feature>
<feature type="sequence conflict" description="In Ref. 4; AAH42386." evidence="10" ref="4">
    <original>G</original>
    <variation>V</variation>
    <location>
        <position position="20"/>
    </location>
</feature>
<keyword id="KW-0472">Membrane</keyword>
<keyword id="KW-0496">Mitochondrion</keyword>
<keyword id="KW-0999">Mitochondrion inner membrane</keyword>
<keyword id="KW-1274">Primary mitochondrial disease</keyword>
<keyword id="KW-1267">Proteomics identification</keyword>
<keyword id="KW-1185">Reference proteome</keyword>
<keyword id="KW-0812">Transmembrane</keyword>
<keyword id="KW-1133">Transmembrane helix</keyword>
<proteinExistence type="evidence at protein level"/>
<dbReference type="EMBL" id="AB167391">
    <property type="protein sequence ID" value="BAE80091.1"/>
    <property type="molecule type" value="Genomic_DNA"/>
</dbReference>
<dbReference type="EMBL" id="AC011499">
    <property type="status" value="NOT_ANNOTATED_CDS"/>
    <property type="molecule type" value="Genomic_DNA"/>
</dbReference>
<dbReference type="EMBL" id="CH471139">
    <property type="protein sequence ID" value="EAW69159.1"/>
    <property type="status" value="ALT_SEQ"/>
    <property type="molecule type" value="Genomic_DNA"/>
</dbReference>
<dbReference type="EMBL" id="BC009557">
    <property type="protein sequence ID" value="AAH09557.1"/>
    <property type="molecule type" value="mRNA"/>
</dbReference>
<dbReference type="EMBL" id="BC042386">
    <property type="protein sequence ID" value="AAH42386.1"/>
    <property type="molecule type" value="mRNA"/>
</dbReference>
<dbReference type="CCDS" id="CCDS12143.1"/>
<dbReference type="RefSeq" id="NP_001295169.1">
    <property type="nucleotide sequence ID" value="NM_001308240.1"/>
</dbReference>
<dbReference type="RefSeq" id="NP_991330.1">
    <property type="nucleotide sequence ID" value="NM_205767.3"/>
</dbReference>
<dbReference type="RefSeq" id="XP_016881737.1">
    <property type="nucleotide sequence ID" value="XM_017026248.1"/>
</dbReference>
<dbReference type="BioGRID" id="125943">
    <property type="interactions" value="101"/>
</dbReference>
<dbReference type="ComplexPortal" id="CPX-6141">
    <property type="entry name" value="MICOS mitochondrial contact site and cristae organizing system complex"/>
</dbReference>
<dbReference type="CORUM" id="Q5XKP0"/>
<dbReference type="FunCoup" id="Q5XKP0">
    <property type="interactions" value="674"/>
</dbReference>
<dbReference type="IntAct" id="Q5XKP0">
    <property type="interactions" value="53"/>
</dbReference>
<dbReference type="MINT" id="Q5XKP0"/>
<dbReference type="STRING" id="9606.ENSP00000468723"/>
<dbReference type="GlyGen" id="Q5XKP0">
    <property type="glycosylation" value="1 site, 1 O-linked glycan (1 site)"/>
</dbReference>
<dbReference type="iPTMnet" id="Q5XKP0"/>
<dbReference type="PhosphoSitePlus" id="Q5XKP0"/>
<dbReference type="SwissPalm" id="Q5XKP0"/>
<dbReference type="BioMuta" id="C19orf70"/>
<dbReference type="jPOST" id="Q5XKP0"/>
<dbReference type="MassIVE" id="Q5XKP0"/>
<dbReference type="PaxDb" id="9606-ENSP00000309561"/>
<dbReference type="PeptideAtlas" id="Q5XKP0"/>
<dbReference type="ProteomicsDB" id="65832"/>
<dbReference type="Pumba" id="Q5XKP0"/>
<dbReference type="TopDownProteomics" id="Q5XKP0"/>
<dbReference type="Antibodypedia" id="49612">
    <property type="antibodies" value="21 antibodies from 12 providers"/>
</dbReference>
<dbReference type="DNASU" id="125988"/>
<dbReference type="Ensembl" id="ENST00000309324.9">
    <property type="protein sequence ID" value="ENSP00000309561.3"/>
    <property type="gene ID" value="ENSG00000174917.9"/>
</dbReference>
<dbReference type="GeneID" id="125988"/>
<dbReference type="KEGG" id="hsa:125988"/>
<dbReference type="MANE-Select" id="ENST00000309324.9">
    <property type="protein sequence ID" value="ENSP00000309561.3"/>
    <property type="RefSeq nucleotide sequence ID" value="NM_205767.3"/>
    <property type="RefSeq protein sequence ID" value="NP_991330.1"/>
</dbReference>
<dbReference type="UCSC" id="uc002mch.2">
    <property type="organism name" value="human"/>
</dbReference>
<dbReference type="UCSC" id="uc060sbv.1">
    <property type="organism name" value="human"/>
</dbReference>
<dbReference type="AGR" id="HGNC:33702"/>
<dbReference type="CTD" id="125988"/>
<dbReference type="DisGeNET" id="125988"/>
<dbReference type="GeneCards" id="MICOS13"/>
<dbReference type="HGNC" id="HGNC:33702">
    <property type="gene designation" value="MICOS13"/>
</dbReference>
<dbReference type="HPA" id="ENSG00000174917">
    <property type="expression patterns" value="Low tissue specificity"/>
</dbReference>
<dbReference type="MalaCards" id="MICOS13"/>
<dbReference type="MIM" id="616658">
    <property type="type" value="gene"/>
</dbReference>
<dbReference type="MIM" id="618329">
    <property type="type" value="phenotype"/>
</dbReference>
<dbReference type="neXtProt" id="NX_Q5XKP0"/>
<dbReference type="OpenTargets" id="ENSG00000174917"/>
<dbReference type="Orphanet" id="67047">
    <property type="disease" value="3-methylglutaconic aciduria type 3"/>
</dbReference>
<dbReference type="PharmGKB" id="PA162378863"/>
<dbReference type="VEuPathDB" id="HostDB:ENSG00000174917"/>
<dbReference type="eggNOG" id="ENOG502S4BC">
    <property type="taxonomic scope" value="Eukaryota"/>
</dbReference>
<dbReference type="GeneTree" id="ENSGT00390000002629"/>
<dbReference type="HOGENOM" id="CLU_152642_0_1_1"/>
<dbReference type="InParanoid" id="Q5XKP0"/>
<dbReference type="OMA" id="GWKYMKD"/>
<dbReference type="OrthoDB" id="5948578at2759"/>
<dbReference type="PAN-GO" id="Q5XKP0">
    <property type="GO annotations" value="3 GO annotations based on evolutionary models"/>
</dbReference>
<dbReference type="PhylomeDB" id="Q5XKP0"/>
<dbReference type="TreeFam" id="TF343386"/>
<dbReference type="PathwayCommons" id="Q5XKP0"/>
<dbReference type="Reactome" id="R-HSA-8949613">
    <property type="pathway name" value="Cristae formation"/>
</dbReference>
<dbReference type="SignaLink" id="Q5XKP0"/>
<dbReference type="BioGRID-ORCS" id="125988">
    <property type="hits" value="110 hits in 1144 CRISPR screens"/>
</dbReference>
<dbReference type="ChiTaRS" id="C19orf70">
    <property type="organism name" value="human"/>
</dbReference>
<dbReference type="GenomeRNAi" id="125988"/>
<dbReference type="Pharos" id="Q5XKP0">
    <property type="development level" value="Tbio"/>
</dbReference>
<dbReference type="PRO" id="PR:Q5XKP0"/>
<dbReference type="Proteomes" id="UP000005640">
    <property type="component" value="Chromosome 19"/>
</dbReference>
<dbReference type="RNAct" id="Q5XKP0">
    <property type="molecule type" value="protein"/>
</dbReference>
<dbReference type="Bgee" id="ENSG00000174917">
    <property type="expression patterns" value="Expressed in apex of heart and 181 other cell types or tissues"/>
</dbReference>
<dbReference type="ExpressionAtlas" id="Q5XKP0">
    <property type="expression patterns" value="baseline and differential"/>
</dbReference>
<dbReference type="GO" id="GO:0140275">
    <property type="term" value="C:MIB complex"/>
    <property type="evidence" value="ECO:0007005"/>
    <property type="project" value="UniProtKB"/>
</dbReference>
<dbReference type="GO" id="GO:0061617">
    <property type="term" value="C:MICOS complex"/>
    <property type="evidence" value="ECO:0000314"/>
    <property type="project" value="UniProtKB"/>
</dbReference>
<dbReference type="GO" id="GO:0044284">
    <property type="term" value="C:mitochondrial crista junction"/>
    <property type="evidence" value="ECO:0000314"/>
    <property type="project" value="UniProtKB"/>
</dbReference>
<dbReference type="GO" id="GO:0005743">
    <property type="term" value="C:mitochondrial inner membrane"/>
    <property type="evidence" value="ECO:0000314"/>
    <property type="project" value="UniProtKB"/>
</dbReference>
<dbReference type="GO" id="GO:0005739">
    <property type="term" value="C:mitochondrion"/>
    <property type="evidence" value="ECO:0000314"/>
    <property type="project" value="HPA"/>
</dbReference>
<dbReference type="GO" id="GO:0005654">
    <property type="term" value="C:nucleoplasm"/>
    <property type="evidence" value="ECO:0000314"/>
    <property type="project" value="HPA"/>
</dbReference>
<dbReference type="GO" id="GO:0001401">
    <property type="term" value="C:SAM complex"/>
    <property type="evidence" value="ECO:0007005"/>
    <property type="project" value="UniProtKB"/>
</dbReference>
<dbReference type="GO" id="GO:0042407">
    <property type="term" value="P:cristae formation"/>
    <property type="evidence" value="ECO:0000315"/>
    <property type="project" value="UniProtKB"/>
</dbReference>
<dbReference type="GO" id="GO:0007007">
    <property type="term" value="P:inner mitochondrial membrane organization"/>
    <property type="evidence" value="ECO:0000305"/>
    <property type="project" value="UniProtKB"/>
</dbReference>
<dbReference type="InterPro" id="IPR026769">
    <property type="entry name" value="Mic13"/>
</dbReference>
<dbReference type="PANTHER" id="PTHR31816">
    <property type="entry name" value="MICOS COMPLEX SUBUNIT MIC13"/>
    <property type="match status" value="1"/>
</dbReference>
<dbReference type="PANTHER" id="PTHR31816:SF3">
    <property type="entry name" value="MICOS COMPLEX SUBUNIT MIC13"/>
    <property type="match status" value="1"/>
</dbReference>
<dbReference type="Pfam" id="PF15884">
    <property type="entry name" value="QIL1"/>
    <property type="match status" value="1"/>
</dbReference>
<name>MIC13_HUMAN</name>